<accession>Q46LF6</accession>
<proteinExistence type="inferred from homology"/>
<gene>
    <name evidence="1" type="primary">ilvD</name>
    <name type="ordered locus">PMN2A_0180</name>
</gene>
<reference key="1">
    <citation type="journal article" date="2007" name="PLoS Genet.">
        <title>Patterns and implications of gene gain and loss in the evolution of Prochlorococcus.</title>
        <authorList>
            <person name="Kettler G.C."/>
            <person name="Martiny A.C."/>
            <person name="Huang K."/>
            <person name="Zucker J."/>
            <person name="Coleman M.L."/>
            <person name="Rodrigue S."/>
            <person name="Chen F."/>
            <person name="Lapidus A."/>
            <person name="Ferriera S."/>
            <person name="Johnson J."/>
            <person name="Steglich C."/>
            <person name="Church G.M."/>
            <person name="Richardson P."/>
            <person name="Chisholm S.W."/>
        </authorList>
    </citation>
    <scope>NUCLEOTIDE SEQUENCE [LARGE SCALE GENOMIC DNA]</scope>
    <source>
        <strain>NATL2A</strain>
    </source>
</reference>
<sequence length="556" mass="58648">MLRSNAITQGIQRSPNRAMLRAVGFDDNDFNKPIIGIANGHSTITPCNMGLMDLANRAESALKEAGAMPQTFGTITVSDGISMGTEGMKYSLVSREVIADSIETACNAQSMDGVLAIGGCDKNMPGAMLSMARMNIPSIFVYGGTIKPGKLDGCDLTVVSSFEAVGQLASGKIDKDRLIAVEKNAIPGPGSCGGMFTANTMSAAIETMGFSLPFSSTMAAVDDEKAESAAESAQVLVNAVKNNIRPLDLLTKEAFENAISVIMAVGGSTNSVLHLLAIARTAGVDLTIDDFERIRQTVPVICDLKPSGKYVTVDLHKAGGIPQVMKLLLDAGMLHGECKTIEGKTIKEVLRDIPSKPKENQDVIRQISNPIYKKGHLAILKGNLASEGSVAKISGVKTPVLTGPARVFESEEECLTAILDNKVKAGDVVVVRYEGPVGGPGMREMLSPTSAIVGQGLGEKVALITDGRFSGGSYGLVVGHVAPEAAVGGTIGLVEEGDSITVDANKLLIQLNVEERELARRKQKWEKPKPRYKTGILGKYSRLVSSSSQGATTDQI</sequence>
<keyword id="KW-0001">2Fe-2S</keyword>
<keyword id="KW-0028">Amino-acid biosynthesis</keyword>
<keyword id="KW-0100">Branched-chain amino acid biosynthesis</keyword>
<keyword id="KW-0408">Iron</keyword>
<keyword id="KW-0411">Iron-sulfur</keyword>
<keyword id="KW-0456">Lyase</keyword>
<keyword id="KW-0460">Magnesium</keyword>
<keyword id="KW-0479">Metal-binding</keyword>
<keyword id="KW-1185">Reference proteome</keyword>
<name>ILVD_PROMT</name>
<protein>
    <recommendedName>
        <fullName evidence="1">Dihydroxy-acid dehydratase</fullName>
        <shortName evidence="1">DAD</shortName>
        <ecNumber evidence="1">4.2.1.9</ecNumber>
    </recommendedName>
</protein>
<organism>
    <name type="scientific">Prochlorococcus marinus (strain NATL2A)</name>
    <dbReference type="NCBI Taxonomy" id="59920"/>
    <lineage>
        <taxon>Bacteria</taxon>
        <taxon>Bacillati</taxon>
        <taxon>Cyanobacteriota</taxon>
        <taxon>Cyanophyceae</taxon>
        <taxon>Synechococcales</taxon>
        <taxon>Prochlorococcaceae</taxon>
        <taxon>Prochlorococcus</taxon>
    </lineage>
</organism>
<dbReference type="EC" id="4.2.1.9" evidence="1"/>
<dbReference type="EMBL" id="CP000095">
    <property type="protein sequence ID" value="AAZ57672.1"/>
    <property type="molecule type" value="Genomic_DNA"/>
</dbReference>
<dbReference type="RefSeq" id="WP_011293714.1">
    <property type="nucleotide sequence ID" value="NC_007335.2"/>
</dbReference>
<dbReference type="SMR" id="Q46LF6"/>
<dbReference type="STRING" id="59920.PMN2A_0180"/>
<dbReference type="KEGG" id="pmn:PMN2A_0180"/>
<dbReference type="HOGENOM" id="CLU_014271_4_2_3"/>
<dbReference type="OrthoDB" id="9807077at2"/>
<dbReference type="PhylomeDB" id="Q46LF6"/>
<dbReference type="UniPathway" id="UPA00047">
    <property type="reaction ID" value="UER00057"/>
</dbReference>
<dbReference type="UniPathway" id="UPA00049">
    <property type="reaction ID" value="UER00061"/>
</dbReference>
<dbReference type="Proteomes" id="UP000002535">
    <property type="component" value="Chromosome"/>
</dbReference>
<dbReference type="GO" id="GO:0051537">
    <property type="term" value="F:2 iron, 2 sulfur cluster binding"/>
    <property type="evidence" value="ECO:0007669"/>
    <property type="project" value="UniProtKB-UniRule"/>
</dbReference>
<dbReference type="GO" id="GO:0004160">
    <property type="term" value="F:dihydroxy-acid dehydratase activity"/>
    <property type="evidence" value="ECO:0007669"/>
    <property type="project" value="UniProtKB-UniRule"/>
</dbReference>
<dbReference type="GO" id="GO:0000287">
    <property type="term" value="F:magnesium ion binding"/>
    <property type="evidence" value="ECO:0007669"/>
    <property type="project" value="UniProtKB-UniRule"/>
</dbReference>
<dbReference type="GO" id="GO:0009097">
    <property type="term" value="P:isoleucine biosynthetic process"/>
    <property type="evidence" value="ECO:0007669"/>
    <property type="project" value="UniProtKB-UniRule"/>
</dbReference>
<dbReference type="GO" id="GO:0009099">
    <property type="term" value="P:L-valine biosynthetic process"/>
    <property type="evidence" value="ECO:0007669"/>
    <property type="project" value="UniProtKB-UniRule"/>
</dbReference>
<dbReference type="FunFam" id="3.50.30.80:FF:000001">
    <property type="entry name" value="Dihydroxy-acid dehydratase"/>
    <property type="match status" value="1"/>
</dbReference>
<dbReference type="Gene3D" id="3.50.30.80">
    <property type="entry name" value="IlvD/EDD C-terminal domain-like"/>
    <property type="match status" value="1"/>
</dbReference>
<dbReference type="HAMAP" id="MF_00012">
    <property type="entry name" value="IlvD"/>
    <property type="match status" value="1"/>
</dbReference>
<dbReference type="InterPro" id="IPR050165">
    <property type="entry name" value="DHAD_IlvD/Edd"/>
</dbReference>
<dbReference type="InterPro" id="IPR042096">
    <property type="entry name" value="Dihydro-acid_dehy_C"/>
</dbReference>
<dbReference type="InterPro" id="IPR004404">
    <property type="entry name" value="DihydroxyA_deHydtase"/>
</dbReference>
<dbReference type="InterPro" id="IPR020558">
    <property type="entry name" value="DiOHA_6PGluconate_deHydtase_CS"/>
</dbReference>
<dbReference type="InterPro" id="IPR056740">
    <property type="entry name" value="ILV_EDD_C"/>
</dbReference>
<dbReference type="InterPro" id="IPR000581">
    <property type="entry name" value="ILV_EDD_N"/>
</dbReference>
<dbReference type="InterPro" id="IPR037237">
    <property type="entry name" value="IlvD/EDD_N"/>
</dbReference>
<dbReference type="NCBIfam" id="TIGR00110">
    <property type="entry name" value="ilvD"/>
    <property type="match status" value="1"/>
</dbReference>
<dbReference type="NCBIfam" id="NF002068">
    <property type="entry name" value="PRK00911.1"/>
    <property type="match status" value="1"/>
</dbReference>
<dbReference type="PANTHER" id="PTHR21000">
    <property type="entry name" value="DIHYDROXY-ACID DEHYDRATASE DAD"/>
    <property type="match status" value="1"/>
</dbReference>
<dbReference type="PANTHER" id="PTHR21000:SF5">
    <property type="entry name" value="DIHYDROXY-ACID DEHYDRATASE, MITOCHONDRIAL"/>
    <property type="match status" value="1"/>
</dbReference>
<dbReference type="Pfam" id="PF24877">
    <property type="entry name" value="ILV_EDD_C"/>
    <property type="match status" value="1"/>
</dbReference>
<dbReference type="Pfam" id="PF00920">
    <property type="entry name" value="ILVD_EDD_N"/>
    <property type="match status" value="1"/>
</dbReference>
<dbReference type="SUPFAM" id="SSF143975">
    <property type="entry name" value="IlvD/EDD N-terminal domain-like"/>
    <property type="match status" value="1"/>
</dbReference>
<dbReference type="SUPFAM" id="SSF52016">
    <property type="entry name" value="LeuD/IlvD-like"/>
    <property type="match status" value="1"/>
</dbReference>
<dbReference type="PROSITE" id="PS00887">
    <property type="entry name" value="ILVD_EDD_2"/>
    <property type="match status" value="1"/>
</dbReference>
<feature type="chain" id="PRO_0000225407" description="Dihydroxy-acid dehydratase">
    <location>
        <begin position="1"/>
        <end position="556"/>
    </location>
</feature>
<feature type="active site" description="Proton acceptor" evidence="1">
    <location>
        <position position="470"/>
    </location>
</feature>
<feature type="binding site" evidence="1">
    <location>
        <position position="47"/>
    </location>
    <ligand>
        <name>[2Fe-2S] cluster</name>
        <dbReference type="ChEBI" id="CHEBI:190135"/>
    </ligand>
</feature>
<feature type="binding site" evidence="1">
    <location>
        <position position="79"/>
    </location>
    <ligand>
        <name>Mg(2+)</name>
        <dbReference type="ChEBI" id="CHEBI:18420"/>
    </ligand>
</feature>
<feature type="binding site" evidence="1">
    <location>
        <position position="120"/>
    </location>
    <ligand>
        <name>[2Fe-2S] cluster</name>
        <dbReference type="ChEBI" id="CHEBI:190135"/>
    </ligand>
</feature>
<feature type="binding site" evidence="1">
    <location>
        <position position="121"/>
    </location>
    <ligand>
        <name>Mg(2+)</name>
        <dbReference type="ChEBI" id="CHEBI:18420"/>
    </ligand>
</feature>
<feature type="binding site" description="via carbamate group" evidence="1">
    <location>
        <position position="122"/>
    </location>
    <ligand>
        <name>Mg(2+)</name>
        <dbReference type="ChEBI" id="CHEBI:18420"/>
    </ligand>
</feature>
<feature type="binding site" evidence="1">
    <location>
        <position position="192"/>
    </location>
    <ligand>
        <name>[2Fe-2S] cluster</name>
        <dbReference type="ChEBI" id="CHEBI:190135"/>
    </ligand>
</feature>
<feature type="binding site" evidence="1">
    <location>
        <position position="444"/>
    </location>
    <ligand>
        <name>Mg(2+)</name>
        <dbReference type="ChEBI" id="CHEBI:18420"/>
    </ligand>
</feature>
<feature type="modified residue" description="N6-carboxylysine" evidence="1">
    <location>
        <position position="122"/>
    </location>
</feature>
<comment type="function">
    <text evidence="1">Functions in the biosynthesis of branched-chain amino acids. Catalyzes the dehydration of (2R,3R)-2,3-dihydroxy-3-methylpentanoate (2,3-dihydroxy-3-methylvalerate) into 2-oxo-3-methylpentanoate (2-oxo-3-methylvalerate) and of (2R)-2,3-dihydroxy-3-methylbutanoate (2,3-dihydroxyisovalerate) into 2-oxo-3-methylbutanoate (2-oxoisovalerate), the penultimate precursor to L-isoleucine and L-valine, respectively.</text>
</comment>
<comment type="catalytic activity">
    <reaction evidence="1">
        <text>(2R)-2,3-dihydroxy-3-methylbutanoate = 3-methyl-2-oxobutanoate + H2O</text>
        <dbReference type="Rhea" id="RHEA:24809"/>
        <dbReference type="ChEBI" id="CHEBI:11851"/>
        <dbReference type="ChEBI" id="CHEBI:15377"/>
        <dbReference type="ChEBI" id="CHEBI:49072"/>
        <dbReference type="EC" id="4.2.1.9"/>
    </reaction>
    <physiologicalReaction direction="left-to-right" evidence="1">
        <dbReference type="Rhea" id="RHEA:24810"/>
    </physiologicalReaction>
</comment>
<comment type="catalytic activity">
    <reaction evidence="1">
        <text>(2R,3R)-2,3-dihydroxy-3-methylpentanoate = (S)-3-methyl-2-oxopentanoate + H2O</text>
        <dbReference type="Rhea" id="RHEA:27694"/>
        <dbReference type="ChEBI" id="CHEBI:15377"/>
        <dbReference type="ChEBI" id="CHEBI:35146"/>
        <dbReference type="ChEBI" id="CHEBI:49258"/>
        <dbReference type="EC" id="4.2.1.9"/>
    </reaction>
    <physiologicalReaction direction="left-to-right" evidence="1">
        <dbReference type="Rhea" id="RHEA:27695"/>
    </physiologicalReaction>
</comment>
<comment type="cofactor">
    <cofactor evidence="1">
        <name>[2Fe-2S] cluster</name>
        <dbReference type="ChEBI" id="CHEBI:190135"/>
    </cofactor>
    <text evidence="1">Binds 1 [2Fe-2S] cluster per subunit. This cluster acts as a Lewis acid cofactor.</text>
</comment>
<comment type="cofactor">
    <cofactor evidence="1">
        <name>Mg(2+)</name>
        <dbReference type="ChEBI" id="CHEBI:18420"/>
    </cofactor>
</comment>
<comment type="pathway">
    <text evidence="1">Amino-acid biosynthesis; L-isoleucine biosynthesis; L-isoleucine from 2-oxobutanoate: step 3/4.</text>
</comment>
<comment type="pathway">
    <text evidence="1">Amino-acid biosynthesis; L-valine biosynthesis; L-valine from pyruvate: step 3/4.</text>
</comment>
<comment type="subunit">
    <text evidence="1">Homodimer.</text>
</comment>
<comment type="similarity">
    <text evidence="1">Belongs to the IlvD/Edd family.</text>
</comment>
<evidence type="ECO:0000255" key="1">
    <source>
        <dbReference type="HAMAP-Rule" id="MF_00012"/>
    </source>
</evidence>